<accession>Q52KR2</accession>
<accession>Q69ZY8</accession>
<protein>
    <recommendedName>
        <fullName>Leucine-rich repeats and immunoglobulin-like domains protein 2</fullName>
        <shortName>LIG-2</shortName>
    </recommendedName>
</protein>
<dbReference type="EMBL" id="AK173030">
    <property type="protein sequence ID" value="BAD32308.1"/>
    <property type="status" value="ALT_INIT"/>
    <property type="molecule type" value="mRNA"/>
</dbReference>
<dbReference type="EMBL" id="BC094228">
    <property type="protein sequence ID" value="AAH94228.1"/>
    <property type="molecule type" value="mRNA"/>
</dbReference>
<dbReference type="CCDS" id="CCDS17701.1">
    <molecule id="Q52KR2-1"/>
</dbReference>
<dbReference type="RefSeq" id="NP_001020238.1">
    <molecule id="Q52KR2-1"/>
    <property type="nucleotide sequence ID" value="NM_001025067.2"/>
</dbReference>
<dbReference type="RefSeq" id="NP_001297627.1">
    <property type="nucleotide sequence ID" value="NM_001310698.1"/>
</dbReference>
<dbReference type="SMR" id="Q52KR2"/>
<dbReference type="BioGRID" id="234657">
    <property type="interactions" value="3"/>
</dbReference>
<dbReference type="FunCoup" id="Q52KR2">
    <property type="interactions" value="3006"/>
</dbReference>
<dbReference type="IntAct" id="Q52KR2">
    <property type="interactions" value="1"/>
</dbReference>
<dbReference type="STRING" id="10090.ENSMUSP00000035999"/>
<dbReference type="GlyCosmos" id="Q52KR2">
    <property type="glycosylation" value="13 sites, No reported glycans"/>
</dbReference>
<dbReference type="GlyGen" id="Q52KR2">
    <property type="glycosylation" value="13 sites, 5 N-linked glycans (9 sites)"/>
</dbReference>
<dbReference type="iPTMnet" id="Q52KR2"/>
<dbReference type="PhosphoSitePlus" id="Q52KR2"/>
<dbReference type="PaxDb" id="10090-ENSMUSP00000035999"/>
<dbReference type="ProteomicsDB" id="252673">
    <molecule id="Q52KR2-1"/>
</dbReference>
<dbReference type="ProteomicsDB" id="252674">
    <molecule id="Q52KR2-2"/>
</dbReference>
<dbReference type="Pumba" id="Q52KR2"/>
<dbReference type="Antibodypedia" id="2748">
    <property type="antibodies" value="134 antibodies from 19 providers"/>
</dbReference>
<dbReference type="DNASU" id="269473"/>
<dbReference type="Ensembl" id="ENSMUST00000046316.11">
    <molecule id="Q52KR2-1"/>
    <property type="protein sequence ID" value="ENSMUSP00000035999.7"/>
    <property type="gene ID" value="ENSMUSG00000032913.14"/>
</dbReference>
<dbReference type="Ensembl" id="ENSMUST00000199070.5">
    <molecule id="Q52KR2-2"/>
    <property type="protein sequence ID" value="ENSMUSP00000142373.2"/>
    <property type="gene ID" value="ENSMUSG00000032913.14"/>
</dbReference>
<dbReference type="GeneID" id="269473"/>
<dbReference type="KEGG" id="mmu:269473"/>
<dbReference type="UCSC" id="uc008que.1">
    <molecule id="Q52KR2-1"/>
    <property type="organism name" value="mouse"/>
</dbReference>
<dbReference type="UCSC" id="uc012cvk.1">
    <molecule id="Q52KR2-2"/>
    <property type="organism name" value="mouse"/>
</dbReference>
<dbReference type="AGR" id="MGI:2443718"/>
<dbReference type="CTD" id="9860"/>
<dbReference type="MGI" id="MGI:2443718">
    <property type="gene designation" value="Lrig2"/>
</dbReference>
<dbReference type="VEuPathDB" id="HostDB:ENSMUSG00000032913"/>
<dbReference type="eggNOG" id="KOG4194">
    <property type="taxonomic scope" value="Eukaryota"/>
</dbReference>
<dbReference type="GeneTree" id="ENSGT00940000158791"/>
<dbReference type="HOGENOM" id="CLU_000288_18_24_1"/>
<dbReference type="InParanoid" id="Q52KR2"/>
<dbReference type="OMA" id="QVTMNHN"/>
<dbReference type="OrthoDB" id="5917255at2759"/>
<dbReference type="PhylomeDB" id="Q52KR2"/>
<dbReference type="TreeFam" id="TF325380"/>
<dbReference type="BioGRID-ORCS" id="269473">
    <property type="hits" value="2 hits in 77 CRISPR screens"/>
</dbReference>
<dbReference type="ChiTaRS" id="Lrig2">
    <property type="organism name" value="mouse"/>
</dbReference>
<dbReference type="PRO" id="PR:Q52KR2"/>
<dbReference type="Proteomes" id="UP000000589">
    <property type="component" value="Chromosome 3"/>
</dbReference>
<dbReference type="RNAct" id="Q52KR2">
    <property type="molecule type" value="protein"/>
</dbReference>
<dbReference type="Bgee" id="ENSMUSG00000032913">
    <property type="expression patterns" value="Expressed in spermatocyte and 234 other cell types or tissues"/>
</dbReference>
<dbReference type="ExpressionAtlas" id="Q52KR2">
    <property type="expression patterns" value="baseline and differential"/>
</dbReference>
<dbReference type="GO" id="GO:0005737">
    <property type="term" value="C:cytoplasm"/>
    <property type="evidence" value="ECO:0007669"/>
    <property type="project" value="UniProtKB-SubCell"/>
</dbReference>
<dbReference type="GO" id="GO:0030426">
    <property type="term" value="C:growth cone"/>
    <property type="evidence" value="ECO:0000314"/>
    <property type="project" value="MGI"/>
</dbReference>
<dbReference type="GO" id="GO:0097708">
    <property type="term" value="C:intracellular vesicle"/>
    <property type="evidence" value="ECO:0000314"/>
    <property type="project" value="MGI"/>
</dbReference>
<dbReference type="GO" id="GO:0016020">
    <property type="term" value="C:membrane"/>
    <property type="evidence" value="ECO:0000314"/>
    <property type="project" value="MGI"/>
</dbReference>
<dbReference type="GO" id="GO:0005886">
    <property type="term" value="C:plasma membrane"/>
    <property type="evidence" value="ECO:0007669"/>
    <property type="project" value="UniProtKB-SubCell"/>
</dbReference>
<dbReference type="GO" id="GO:0005102">
    <property type="term" value="F:signaling receptor binding"/>
    <property type="evidence" value="ECO:0000353"/>
    <property type="project" value="MGI"/>
</dbReference>
<dbReference type="GO" id="GO:0060384">
    <property type="term" value="P:innervation"/>
    <property type="evidence" value="ECO:0000316"/>
    <property type="project" value="MGI"/>
</dbReference>
<dbReference type="GO" id="GO:0006509">
    <property type="term" value="P:membrane protein ectodomain proteolysis"/>
    <property type="evidence" value="ECO:0000315"/>
    <property type="project" value="MGI"/>
</dbReference>
<dbReference type="GO" id="GO:0048681">
    <property type="term" value="P:negative regulation of axon regeneration"/>
    <property type="evidence" value="ECO:0000315"/>
    <property type="project" value="MGI"/>
</dbReference>
<dbReference type="GO" id="GO:0051045">
    <property type="term" value="P:negative regulation of membrane protein ectodomain proteolysis"/>
    <property type="evidence" value="ECO:0000315"/>
    <property type="project" value="MGI"/>
</dbReference>
<dbReference type="GO" id="GO:0010977">
    <property type="term" value="P:negative regulation of neuron projection development"/>
    <property type="evidence" value="ECO:0000316"/>
    <property type="project" value="MGI"/>
</dbReference>
<dbReference type="GO" id="GO:2000010">
    <property type="term" value="P:positive regulation of protein localization to cell surface"/>
    <property type="evidence" value="ECO:0000315"/>
    <property type="project" value="MGI"/>
</dbReference>
<dbReference type="GO" id="GO:0034394">
    <property type="term" value="P:protein localization to cell surface"/>
    <property type="evidence" value="ECO:0000315"/>
    <property type="project" value="MGI"/>
</dbReference>
<dbReference type="GO" id="GO:0048679">
    <property type="term" value="P:regulation of axon regeneration"/>
    <property type="evidence" value="ECO:0000316"/>
    <property type="project" value="MGI"/>
</dbReference>
<dbReference type="GO" id="GO:2001222">
    <property type="term" value="P:regulation of neuron migration"/>
    <property type="evidence" value="ECO:0000316"/>
    <property type="project" value="MGI"/>
</dbReference>
<dbReference type="GO" id="GO:0010640">
    <property type="term" value="P:regulation of platelet-derived growth factor receptor signaling pathway"/>
    <property type="evidence" value="ECO:0000316"/>
    <property type="project" value="MGI"/>
</dbReference>
<dbReference type="GO" id="GO:0007605">
    <property type="term" value="P:sensory perception of sound"/>
    <property type="evidence" value="ECO:0000315"/>
    <property type="project" value="MGI"/>
</dbReference>
<dbReference type="CDD" id="cd05763">
    <property type="entry name" value="IgI_LRIG1-like"/>
    <property type="match status" value="1"/>
</dbReference>
<dbReference type="FunFam" id="2.60.40.10:FF:000161">
    <property type="entry name" value="Leucine rich repeats and immunoglobulin like domains 2"/>
    <property type="match status" value="1"/>
</dbReference>
<dbReference type="FunFam" id="3.80.10.10:FF:001280">
    <property type="entry name" value="Leucine rich repeats and immunoglobulin like domains 2"/>
    <property type="match status" value="1"/>
</dbReference>
<dbReference type="FunFam" id="3.80.10.10:FF:002527">
    <property type="entry name" value="Leucine rich repeats and immunoglobulin like domains 2"/>
    <property type="match status" value="1"/>
</dbReference>
<dbReference type="FunFam" id="2.60.40.10:FF:000150">
    <property type="entry name" value="Leucine rich repeats and immunoglobulin like domains 3"/>
    <property type="match status" value="1"/>
</dbReference>
<dbReference type="FunFam" id="2.60.40.10:FF:000224">
    <property type="entry name" value="Leucine rich repeats and immunoglobulin like domains 3"/>
    <property type="match status" value="1"/>
</dbReference>
<dbReference type="FunFam" id="3.80.10.10:FF:000023">
    <property type="entry name" value="Leucine rich repeats and immunoglobulin like domains 3"/>
    <property type="match status" value="1"/>
</dbReference>
<dbReference type="Gene3D" id="2.60.40.10">
    <property type="entry name" value="Immunoglobulins"/>
    <property type="match status" value="3"/>
</dbReference>
<dbReference type="Gene3D" id="3.80.10.10">
    <property type="entry name" value="Ribonuclease Inhibitor"/>
    <property type="match status" value="2"/>
</dbReference>
<dbReference type="InterPro" id="IPR000483">
    <property type="entry name" value="Cys-rich_flank_reg_C"/>
</dbReference>
<dbReference type="InterPro" id="IPR007110">
    <property type="entry name" value="Ig-like_dom"/>
</dbReference>
<dbReference type="InterPro" id="IPR036179">
    <property type="entry name" value="Ig-like_dom_sf"/>
</dbReference>
<dbReference type="InterPro" id="IPR013783">
    <property type="entry name" value="Ig-like_fold"/>
</dbReference>
<dbReference type="InterPro" id="IPR013098">
    <property type="entry name" value="Ig_I-set"/>
</dbReference>
<dbReference type="InterPro" id="IPR003599">
    <property type="entry name" value="Ig_sub"/>
</dbReference>
<dbReference type="InterPro" id="IPR003598">
    <property type="entry name" value="Ig_sub2"/>
</dbReference>
<dbReference type="InterPro" id="IPR001611">
    <property type="entry name" value="Leu-rich_rpt"/>
</dbReference>
<dbReference type="InterPro" id="IPR003591">
    <property type="entry name" value="Leu-rich_rpt_typical-subtyp"/>
</dbReference>
<dbReference type="InterPro" id="IPR050467">
    <property type="entry name" value="LRFN"/>
</dbReference>
<dbReference type="InterPro" id="IPR032675">
    <property type="entry name" value="LRR_dom_sf"/>
</dbReference>
<dbReference type="PANTHER" id="PTHR45842:SF12">
    <property type="entry name" value="KEKKON 5, ISOFORM A"/>
    <property type="match status" value="1"/>
</dbReference>
<dbReference type="PANTHER" id="PTHR45842">
    <property type="entry name" value="SYNAPTIC ADHESION-LIKE MOLECULE SALM"/>
    <property type="match status" value="1"/>
</dbReference>
<dbReference type="Pfam" id="PF07679">
    <property type="entry name" value="I-set"/>
    <property type="match status" value="2"/>
</dbReference>
<dbReference type="Pfam" id="PF13927">
    <property type="entry name" value="Ig_3"/>
    <property type="match status" value="1"/>
</dbReference>
<dbReference type="Pfam" id="PF13855">
    <property type="entry name" value="LRR_8"/>
    <property type="match status" value="4"/>
</dbReference>
<dbReference type="Pfam" id="PF01463">
    <property type="entry name" value="LRRCT"/>
    <property type="match status" value="1"/>
</dbReference>
<dbReference type="PRINTS" id="PR00019">
    <property type="entry name" value="LEURICHRPT"/>
</dbReference>
<dbReference type="SMART" id="SM00409">
    <property type="entry name" value="IG"/>
    <property type="match status" value="3"/>
</dbReference>
<dbReference type="SMART" id="SM00408">
    <property type="entry name" value="IGc2"/>
    <property type="match status" value="3"/>
</dbReference>
<dbReference type="SMART" id="SM00365">
    <property type="entry name" value="LRR_SD22"/>
    <property type="match status" value="9"/>
</dbReference>
<dbReference type="SMART" id="SM00369">
    <property type="entry name" value="LRR_TYP"/>
    <property type="match status" value="12"/>
</dbReference>
<dbReference type="SMART" id="SM00082">
    <property type="entry name" value="LRRCT"/>
    <property type="match status" value="1"/>
</dbReference>
<dbReference type="SUPFAM" id="SSF48726">
    <property type="entry name" value="Immunoglobulin"/>
    <property type="match status" value="3"/>
</dbReference>
<dbReference type="SUPFAM" id="SSF52058">
    <property type="entry name" value="L domain-like"/>
    <property type="match status" value="2"/>
</dbReference>
<dbReference type="PROSITE" id="PS50835">
    <property type="entry name" value="IG_LIKE"/>
    <property type="match status" value="3"/>
</dbReference>
<dbReference type="PROSITE" id="PS51450">
    <property type="entry name" value="LRR"/>
    <property type="match status" value="15"/>
</dbReference>
<proteinExistence type="evidence at protein level"/>
<evidence type="ECO:0000250" key="1"/>
<evidence type="ECO:0000255" key="2"/>
<evidence type="ECO:0000255" key="3">
    <source>
        <dbReference type="PROSITE-ProRule" id="PRU00114"/>
    </source>
</evidence>
<evidence type="ECO:0000303" key="4">
    <source>
    </source>
</evidence>
<evidence type="ECO:0000305" key="5"/>
<evidence type="ECO:0007744" key="6">
    <source>
    </source>
</evidence>
<sequence>MAAAPRGIWEQRRLGCGLGPLARLLILAQALRLLPAARAGLCPAPCACRLPLLDCSRRKLPAPSWRALSGPLPSDISSLDLSHNRLSNWNNTLESQTLQEVKMNYNELTEIPYFGEPTPNITLLSLVHNLIPEINAEAFELYSALESLDLSSNIISEIKTSSFPRMSLKYLNLSNNRISTLEAGCFDNLSDSLLVVKLNRNRISMIPPKVFKLPHLQFLELKRNRIKIVEGLTFQGLDSLRSLKMQRNGISKLKDGAFFGLNNMEELELEHNNLTGVNKGWLYGLRMLQQLYMSQNAIEKISPDAWEFCQRLSELDLSYNQLTRLDESAFVGLSLLERLNLGDNRVTHIADGVFRFLSNLQTLDLRNNDISWAIEDASEAFSGLKSLTKLILQGNRIKSVTQKAFIGLESLEYLDLNNNAIMSIQENAFSQTHLKGLVLNTSSLLCDCHLKWLLQWLVDNNFHHSVNVSCAHPEWLAGQSILNVDLKDFVCDDFLKPQIRTHPESTIALRGVNVTLTCTAVSSSDSPMSTIWRKDSEILYDVDIENFVRYRQQDGEALEYTSVLRLFSVNFTDEGKYQCIVTNHFGSNYSQKAKLTVNEMPSFLKTPMDLTIRTGAMARLECAAEGHPTPQISWQKDGGTDFPAARERRMHVMPEDDVFFIANVKIEDMGIYSCMAQNIAGGLSANASLTVLETPSFIRPLEDKTVTRGETAVLQCIAGGSPAPRLNWTKDDGPLLVTERHFFAAANQLLIIVDAGLEDAGKYTCLMSNTLGTERGHIYLNVISSPNCDSSQSSIGHEDDGWTTVGIVIIVVVCCVVGTSLIWVIVIYHMRRKNEDYSITNTEELNLPADIPSYLSSQGTLSEPQEGYSNSEAGSHQQLMPPANGYTHRGTDGGAGTRVICSDCYDNANIYSRTREYCPYTYIAEEDVLDQALSSLMVQMPKETFLSHPPQDAANLESLIPSAEREPAAFPTNHERMTENLPFSQRSSEIFQRPLWNMNRELGLLPFSQQPVLESPELTERDPNCSSPVTCRRLHDHAFDFSRTRIIQDGTEGT</sequence>
<keyword id="KW-0025">Alternative splicing</keyword>
<keyword id="KW-1003">Cell membrane</keyword>
<keyword id="KW-0963">Cytoplasm</keyword>
<keyword id="KW-1015">Disulfide bond</keyword>
<keyword id="KW-0325">Glycoprotein</keyword>
<keyword id="KW-0393">Immunoglobulin domain</keyword>
<keyword id="KW-0433">Leucine-rich repeat</keyword>
<keyword id="KW-0472">Membrane</keyword>
<keyword id="KW-0597">Phosphoprotein</keyword>
<keyword id="KW-1185">Reference proteome</keyword>
<keyword id="KW-0677">Repeat</keyword>
<keyword id="KW-0732">Signal</keyword>
<keyword id="KW-0812">Transmembrane</keyword>
<keyword id="KW-1133">Transmembrane helix</keyword>
<comment type="subcellular location">
    <subcellularLocation>
        <location evidence="1">Cell membrane</location>
        <topology evidence="1">Single-pass type I membrane protein</topology>
    </subcellularLocation>
    <subcellularLocation>
        <location evidence="1">Cytoplasm</location>
    </subcellularLocation>
</comment>
<comment type="alternative products">
    <event type="alternative splicing"/>
    <isoform>
        <id>Q52KR2-1</id>
        <name>1</name>
        <sequence type="displayed"/>
    </isoform>
    <isoform>
        <id>Q52KR2-2</id>
        <name>2</name>
        <sequence type="described" ref="VSP_014993 VSP_057113"/>
    </isoform>
</comment>
<comment type="miscellaneous">
    <molecule>Isoform 2</molecule>
    <text evidence="5">May be due to a competing acceptor splice site.</text>
</comment>
<comment type="sequence caution" evidence="5">
    <conflict type="erroneous initiation">
        <sequence resource="EMBL-CDS" id="BAD32308"/>
    </conflict>
    <text>Extended N-terminus.</text>
</comment>
<feature type="signal peptide" evidence="2">
    <location>
        <begin position="1"/>
        <end position="39"/>
    </location>
</feature>
<feature type="chain" id="PRO_0000014830" description="Leucine-rich repeats and immunoglobulin-like domains protein 2">
    <location>
        <begin position="40"/>
        <end position="1054"/>
    </location>
</feature>
<feature type="transmembrane region" description="Helical" evidence="2">
    <location>
        <begin position="807"/>
        <end position="827"/>
    </location>
</feature>
<feature type="domain" description="LRRNT">
    <location>
        <begin position="40"/>
        <end position="74"/>
    </location>
</feature>
<feature type="repeat" description="LRR 1">
    <location>
        <begin position="75"/>
        <end position="96"/>
    </location>
</feature>
<feature type="repeat" description="LRR 2">
    <location>
        <begin position="97"/>
        <end position="118"/>
    </location>
</feature>
<feature type="repeat" description="LRR 3">
    <location>
        <begin position="120"/>
        <end position="141"/>
    </location>
</feature>
<feature type="repeat" description="LRR 4">
    <location>
        <begin position="144"/>
        <end position="165"/>
    </location>
</feature>
<feature type="repeat" description="LRR 5">
    <location>
        <begin position="167"/>
        <end position="188"/>
    </location>
</feature>
<feature type="repeat" description="LRR 6">
    <location>
        <begin position="192"/>
        <end position="213"/>
    </location>
</feature>
<feature type="repeat" description="LRR 7">
    <location>
        <begin position="215"/>
        <end position="236"/>
    </location>
</feature>
<feature type="repeat" description="LRR 8">
    <location>
        <begin position="239"/>
        <end position="260"/>
    </location>
</feature>
<feature type="repeat" description="LRR 9">
    <location>
        <begin position="263"/>
        <end position="284"/>
    </location>
</feature>
<feature type="repeat" description="LRR 10">
    <location>
        <begin position="287"/>
        <end position="308"/>
    </location>
</feature>
<feature type="repeat" description="LRR 11">
    <location>
        <begin position="311"/>
        <end position="332"/>
    </location>
</feature>
<feature type="repeat" description="LRR 12">
    <location>
        <begin position="335"/>
        <end position="356"/>
    </location>
</feature>
<feature type="repeat" description="LRR 13">
    <location>
        <begin position="359"/>
        <end position="381"/>
    </location>
</feature>
<feature type="repeat" description="LRR 14">
    <location>
        <begin position="386"/>
        <end position="407"/>
    </location>
</feature>
<feature type="repeat" description="LRR 15">
    <location>
        <begin position="410"/>
        <end position="431"/>
    </location>
</feature>
<feature type="domain" description="LRRCT">
    <location>
        <begin position="442"/>
        <end position="493"/>
    </location>
</feature>
<feature type="domain" description="Ig-like C2-type 1">
    <location>
        <begin position="497"/>
        <end position="596"/>
    </location>
</feature>
<feature type="domain" description="Ig-like C2-type 2">
    <location>
        <begin position="601"/>
        <end position="690"/>
    </location>
</feature>
<feature type="domain" description="Ig-like C2-type 3">
    <location>
        <begin position="695"/>
        <end position="784"/>
    </location>
</feature>
<feature type="modified residue" description="Phosphotyrosine" evidence="6">
    <location>
        <position position="905"/>
    </location>
</feature>
<feature type="glycosylation site" description="N-linked (GlcNAc...) asparagine" evidence="2">
    <location>
        <position position="90"/>
    </location>
</feature>
<feature type="glycosylation site" description="N-linked (GlcNAc...) asparagine" evidence="2">
    <location>
        <position position="120"/>
    </location>
</feature>
<feature type="glycosylation site" description="N-linked (GlcNAc...) asparagine" evidence="2">
    <location>
        <position position="172"/>
    </location>
</feature>
<feature type="glycosylation site" description="N-linked (GlcNAc...) asparagine" evidence="2">
    <location>
        <position position="188"/>
    </location>
</feature>
<feature type="glycosylation site" description="N-linked (GlcNAc...) asparagine" evidence="2">
    <location>
        <position position="273"/>
    </location>
</feature>
<feature type="glycosylation site" description="N-linked (GlcNAc...) asparagine" evidence="2">
    <location>
        <position position="440"/>
    </location>
</feature>
<feature type="glycosylation site" description="N-linked (GlcNAc...) asparagine" evidence="2">
    <location>
        <position position="467"/>
    </location>
</feature>
<feature type="glycosylation site" description="N-linked (GlcNAc...) asparagine" evidence="2">
    <location>
        <position position="513"/>
    </location>
</feature>
<feature type="glycosylation site" description="N-linked (GlcNAc...) asparagine" evidence="2">
    <location>
        <position position="570"/>
    </location>
</feature>
<feature type="glycosylation site" description="N-linked (GlcNAc...) asparagine" evidence="2">
    <location>
        <position position="588"/>
    </location>
</feature>
<feature type="glycosylation site" description="N-linked (GlcNAc...) asparagine" evidence="2">
    <location>
        <position position="686"/>
    </location>
</feature>
<feature type="glycosylation site" description="N-linked (GlcNAc...) asparagine" evidence="2">
    <location>
        <position position="727"/>
    </location>
</feature>
<feature type="glycosylation site" description="N-linked (GlcNAc...) asparagine" evidence="2">
    <location>
        <position position="1024"/>
    </location>
</feature>
<feature type="disulfide bond" evidence="3">
    <location>
        <begin position="518"/>
        <end position="579"/>
    </location>
</feature>
<feature type="disulfide bond" evidence="3">
    <location>
        <begin position="622"/>
        <end position="674"/>
    </location>
</feature>
<feature type="disulfide bond" evidence="3">
    <location>
        <begin position="716"/>
        <end position="765"/>
    </location>
</feature>
<feature type="splice variant" id="VSP_014993" description="In isoform 2." evidence="4">
    <location>
        <begin position="79"/>
        <end position="436"/>
    </location>
</feature>
<feature type="splice variant" id="VSP_057113" description="In isoform 2." evidence="4">
    <location>
        <begin position="843"/>
        <end position="849"/>
    </location>
</feature>
<gene>
    <name type="primary">Lrig2</name>
    <name type="synonym">Kiaa0806</name>
</gene>
<name>LRIG2_MOUSE</name>
<organism>
    <name type="scientific">Mus musculus</name>
    <name type="common">Mouse</name>
    <dbReference type="NCBI Taxonomy" id="10090"/>
    <lineage>
        <taxon>Eukaryota</taxon>
        <taxon>Metazoa</taxon>
        <taxon>Chordata</taxon>
        <taxon>Craniata</taxon>
        <taxon>Vertebrata</taxon>
        <taxon>Euteleostomi</taxon>
        <taxon>Mammalia</taxon>
        <taxon>Eutheria</taxon>
        <taxon>Euarchontoglires</taxon>
        <taxon>Glires</taxon>
        <taxon>Rodentia</taxon>
        <taxon>Myomorpha</taxon>
        <taxon>Muroidea</taxon>
        <taxon>Muridae</taxon>
        <taxon>Murinae</taxon>
        <taxon>Mus</taxon>
        <taxon>Mus</taxon>
    </lineage>
</organism>
<reference key="1">
    <citation type="journal article" date="2004" name="DNA Res.">
        <title>Prediction of the coding sequences of mouse homologues of KIAA gene: IV. The complete nucleotide sequences of 500 mouse KIAA-homologous cDNAs identified by screening of terminal sequences of cDNA clones randomly sampled from size-fractionated libraries.</title>
        <authorList>
            <person name="Okazaki N."/>
            <person name="Kikuno R."/>
            <person name="Ohara R."/>
            <person name="Inamoto S."/>
            <person name="Koseki H."/>
            <person name="Hiraoka S."/>
            <person name="Saga Y."/>
            <person name="Seino S."/>
            <person name="Nishimura M."/>
            <person name="Kaisho T."/>
            <person name="Hoshino K."/>
            <person name="Kitamura H."/>
            <person name="Nagase T."/>
            <person name="Ohara O."/>
            <person name="Koga H."/>
        </authorList>
    </citation>
    <scope>NUCLEOTIDE SEQUENCE [LARGE SCALE MRNA] (ISOFORM 2)</scope>
    <source>
        <tissue>Fetal brain</tissue>
    </source>
</reference>
<reference key="2">
    <citation type="journal article" date="2004" name="Genome Res.">
        <title>The status, quality, and expansion of the NIH full-length cDNA project: the Mammalian Gene Collection (MGC).</title>
        <authorList>
            <consortium name="The MGC Project Team"/>
        </authorList>
    </citation>
    <scope>NUCLEOTIDE SEQUENCE [LARGE SCALE MRNA] (ISOFORM 1)</scope>
    <source>
        <strain>C57BL/6J</strain>
        <tissue>Brain</tissue>
    </source>
</reference>
<reference key="3">
    <citation type="journal article" date="2005" name="Nat. Biotechnol.">
        <title>Immunoaffinity profiling of tyrosine phosphorylation in cancer cells.</title>
        <authorList>
            <person name="Rush J."/>
            <person name="Moritz A."/>
            <person name="Lee K.A."/>
            <person name="Guo A."/>
            <person name="Goss V.L."/>
            <person name="Spek E.J."/>
            <person name="Zhang H."/>
            <person name="Zha X.-M."/>
            <person name="Polakiewicz R.D."/>
            <person name="Comb M.J."/>
        </authorList>
    </citation>
    <scope>PHOSPHORYLATION [LARGE SCALE ANALYSIS] AT TYR-905</scope>
    <scope>IDENTIFICATION BY MASS SPECTROMETRY [LARGE SCALE ANALYSIS]</scope>
</reference>